<dbReference type="EMBL" id="AC011661">
    <property type="protein sequence ID" value="AAF16626.1"/>
    <property type="molecule type" value="Genomic_DNA"/>
</dbReference>
<dbReference type="EMBL" id="CP002684">
    <property type="protein sequence ID" value="AEE28730.1"/>
    <property type="molecule type" value="Genomic_DNA"/>
</dbReference>
<dbReference type="EMBL" id="CP002684">
    <property type="protein sequence ID" value="AEE28731.1"/>
    <property type="molecule type" value="Genomic_DNA"/>
</dbReference>
<dbReference type="EMBL" id="CP002684">
    <property type="protein sequence ID" value="AEE28732.1"/>
    <property type="molecule type" value="Genomic_DNA"/>
</dbReference>
<dbReference type="EMBL" id="CP002684">
    <property type="protein sequence ID" value="ANM59814.1"/>
    <property type="molecule type" value="Genomic_DNA"/>
</dbReference>
<dbReference type="EMBL" id="CP002684">
    <property type="protein sequence ID" value="ANM59815.1"/>
    <property type="molecule type" value="Genomic_DNA"/>
</dbReference>
<dbReference type="EMBL" id="CP002684">
    <property type="protein sequence ID" value="ANM59816.1"/>
    <property type="molecule type" value="Genomic_DNA"/>
</dbReference>
<dbReference type="EMBL" id="BT004216">
    <property type="protein sequence ID" value="AAO42233.1"/>
    <property type="molecule type" value="mRNA"/>
</dbReference>
<dbReference type="EMBL" id="BT005041">
    <property type="protein sequence ID" value="AAO50574.1"/>
    <property type="molecule type" value="mRNA"/>
</dbReference>
<dbReference type="EMBL" id="AY084438">
    <property type="protein sequence ID" value="AAM61011.1"/>
    <property type="status" value="ALT_INIT"/>
    <property type="molecule type" value="mRNA"/>
</dbReference>
<dbReference type="PIR" id="H86247">
    <property type="entry name" value="H86247"/>
</dbReference>
<dbReference type="RefSeq" id="NP_001031023.1">
    <property type="nucleotide sequence ID" value="NM_001035946.2"/>
</dbReference>
<dbReference type="RefSeq" id="NP_001322144.1">
    <property type="nucleotide sequence ID" value="NM_001331983.1"/>
</dbReference>
<dbReference type="RefSeq" id="NP_001322145.1">
    <property type="nucleotide sequence ID" value="NM_001331981.1"/>
</dbReference>
<dbReference type="RefSeq" id="NP_001322146.1">
    <property type="nucleotide sequence ID" value="NM_001331982.1"/>
</dbReference>
<dbReference type="RefSeq" id="NP_563890.1">
    <property type="nucleotide sequence ID" value="NM_101013.1"/>
</dbReference>
<dbReference type="RefSeq" id="NP_849639.1">
    <property type="nucleotide sequence ID" value="NM_179308.4"/>
</dbReference>
<dbReference type="SMR" id="Q9LPZ4"/>
<dbReference type="FunCoup" id="Q9LPZ4">
    <property type="interactions" value="2425"/>
</dbReference>
<dbReference type="STRING" id="3702.Q9LPZ4"/>
<dbReference type="PaxDb" id="3702-AT1G11400.2"/>
<dbReference type="ProteomicsDB" id="226015"/>
<dbReference type="EnsemblPlants" id="AT1G11400.1">
    <property type="protein sequence ID" value="AT1G11400.1"/>
    <property type="gene ID" value="AT1G11400"/>
</dbReference>
<dbReference type="EnsemblPlants" id="AT1G11400.2">
    <property type="protein sequence ID" value="AT1G11400.2"/>
    <property type="gene ID" value="AT1G11400"/>
</dbReference>
<dbReference type="EnsemblPlants" id="AT1G11400.3">
    <property type="protein sequence ID" value="AT1G11400.3"/>
    <property type="gene ID" value="AT1G11400"/>
</dbReference>
<dbReference type="EnsemblPlants" id="AT1G11400.4">
    <property type="protein sequence ID" value="AT1G11400.4"/>
    <property type="gene ID" value="AT1G11400"/>
</dbReference>
<dbReference type="EnsemblPlants" id="AT1G11400.5">
    <property type="protein sequence ID" value="AT1G11400.5"/>
    <property type="gene ID" value="AT1G11400"/>
</dbReference>
<dbReference type="EnsemblPlants" id="AT1G11400.6">
    <property type="protein sequence ID" value="AT1G11400.6"/>
    <property type="gene ID" value="AT1G11400"/>
</dbReference>
<dbReference type="GeneID" id="837682"/>
<dbReference type="Gramene" id="AT1G11400.1">
    <property type="protein sequence ID" value="AT1G11400.1"/>
    <property type="gene ID" value="AT1G11400"/>
</dbReference>
<dbReference type="Gramene" id="AT1G11400.2">
    <property type="protein sequence ID" value="AT1G11400.2"/>
    <property type="gene ID" value="AT1G11400"/>
</dbReference>
<dbReference type="Gramene" id="AT1G11400.3">
    <property type="protein sequence ID" value="AT1G11400.3"/>
    <property type="gene ID" value="AT1G11400"/>
</dbReference>
<dbReference type="Gramene" id="AT1G11400.4">
    <property type="protein sequence ID" value="AT1G11400.4"/>
    <property type="gene ID" value="AT1G11400"/>
</dbReference>
<dbReference type="Gramene" id="AT1G11400.5">
    <property type="protein sequence ID" value="AT1G11400.5"/>
    <property type="gene ID" value="AT1G11400"/>
</dbReference>
<dbReference type="Gramene" id="AT1G11400.6">
    <property type="protein sequence ID" value="AT1G11400.6"/>
    <property type="gene ID" value="AT1G11400"/>
</dbReference>
<dbReference type="KEGG" id="ath:AT1G11400"/>
<dbReference type="Araport" id="AT1G11400"/>
<dbReference type="TAIR" id="AT1G11400">
    <property type="gene designation" value="PYM"/>
</dbReference>
<dbReference type="eggNOG" id="KOG4325">
    <property type="taxonomic scope" value="Eukaryota"/>
</dbReference>
<dbReference type="HOGENOM" id="CLU_074603_1_0_1"/>
<dbReference type="InParanoid" id="Q9LPZ4"/>
<dbReference type="OMA" id="IPGCADS"/>
<dbReference type="OrthoDB" id="21625at2759"/>
<dbReference type="PhylomeDB" id="Q9LPZ4"/>
<dbReference type="PRO" id="PR:Q9LPZ4"/>
<dbReference type="Proteomes" id="UP000006548">
    <property type="component" value="Chromosome 1"/>
</dbReference>
<dbReference type="ExpressionAtlas" id="Q9LPZ4">
    <property type="expression patterns" value="baseline and differential"/>
</dbReference>
<dbReference type="GO" id="GO:0005737">
    <property type="term" value="C:cytoplasm"/>
    <property type="evidence" value="ECO:0000314"/>
    <property type="project" value="TAIR"/>
</dbReference>
<dbReference type="GO" id="GO:0005730">
    <property type="term" value="C:nucleolus"/>
    <property type="evidence" value="ECO:0000314"/>
    <property type="project" value="TAIR"/>
</dbReference>
<dbReference type="GO" id="GO:0005654">
    <property type="term" value="C:nucleoplasm"/>
    <property type="evidence" value="ECO:0000314"/>
    <property type="project" value="TAIR"/>
</dbReference>
<dbReference type="GO" id="GO:0003723">
    <property type="term" value="F:RNA binding"/>
    <property type="evidence" value="ECO:0007669"/>
    <property type="project" value="UniProtKB-KW"/>
</dbReference>
<dbReference type="GO" id="GO:1903259">
    <property type="term" value="P:exon-exon junction complex disassembly"/>
    <property type="evidence" value="ECO:0007669"/>
    <property type="project" value="InterPro"/>
</dbReference>
<dbReference type="GO" id="GO:0051028">
    <property type="term" value="P:mRNA transport"/>
    <property type="evidence" value="ECO:0007669"/>
    <property type="project" value="UniProtKB-KW"/>
</dbReference>
<dbReference type="GO" id="GO:0000184">
    <property type="term" value="P:nuclear-transcribed mRNA catabolic process, nonsense-mediated decay"/>
    <property type="evidence" value="ECO:0007669"/>
    <property type="project" value="UniProtKB-KW"/>
</dbReference>
<dbReference type="GO" id="GO:0010628">
    <property type="term" value="P:positive regulation of gene expression"/>
    <property type="evidence" value="ECO:0000270"/>
    <property type="project" value="TAIR"/>
</dbReference>
<dbReference type="GO" id="GO:0006417">
    <property type="term" value="P:regulation of translation"/>
    <property type="evidence" value="ECO:0007669"/>
    <property type="project" value="UniProtKB-KW"/>
</dbReference>
<dbReference type="InterPro" id="IPR039333">
    <property type="entry name" value="PYM1"/>
</dbReference>
<dbReference type="InterPro" id="IPR015362">
    <property type="entry name" value="WIBG_mago-bd"/>
</dbReference>
<dbReference type="InterPro" id="IPR036348">
    <property type="entry name" value="WIBG_N_sf"/>
</dbReference>
<dbReference type="PANTHER" id="PTHR22959:SF0">
    <property type="entry name" value="PARTNER OF Y14 AND MAGO"/>
    <property type="match status" value="1"/>
</dbReference>
<dbReference type="PANTHER" id="PTHR22959">
    <property type="entry name" value="PYM PROTEIN"/>
    <property type="match status" value="1"/>
</dbReference>
<dbReference type="Pfam" id="PF09282">
    <property type="entry name" value="Mago-bind"/>
    <property type="match status" value="1"/>
</dbReference>
<dbReference type="SMART" id="SM01273">
    <property type="entry name" value="Mago-bind"/>
    <property type="match status" value="1"/>
</dbReference>
<dbReference type="SUPFAM" id="SSF101931">
    <property type="entry name" value="Pym (Within the bgcn gene intron protein, WIBG), N-terminal domain"/>
    <property type="match status" value="1"/>
</dbReference>
<feature type="chain" id="PRO_0000440129" description="Partner of Y14 and mago">
    <location>
        <begin position="1"/>
        <end position="204"/>
    </location>
</feature>
<feature type="region of interest" description="Disordered" evidence="2">
    <location>
        <begin position="1"/>
        <end position="121"/>
    </location>
</feature>
<feature type="region of interest" description="Disordered" evidence="2">
    <location>
        <begin position="133"/>
        <end position="153"/>
    </location>
</feature>
<feature type="short sequence motif" description="Nuclear export signal" evidence="3">
    <location>
        <begin position="195"/>
        <end position="200"/>
    </location>
</feature>
<feature type="compositionally biased region" description="Basic and acidic residues" evidence="2">
    <location>
        <begin position="7"/>
        <end position="36"/>
    </location>
</feature>
<feature type="compositionally biased region" description="Polar residues" evidence="2">
    <location>
        <begin position="104"/>
        <end position="121"/>
    </location>
</feature>
<feature type="mutagenesis site" description="Accumulation in the nucleus; when associated with A-199." evidence="3">
    <original>L</original>
    <variation>A</variation>
    <location>
        <position position="196"/>
    </location>
</feature>
<feature type="mutagenesis site" description="Accumulation in the nucleus; when associated with A-196." evidence="3">
    <original>L</original>
    <variation>A</variation>
    <location>
        <position position="199"/>
    </location>
</feature>
<proteinExistence type="evidence at protein level"/>
<protein>
    <recommendedName>
        <fullName evidence="7">Partner of Y14 and mago</fullName>
        <shortName evidence="6">AtPYM</shortName>
    </recommendedName>
</protein>
<reference key="1">
    <citation type="journal article" date="2000" name="Nature">
        <title>Sequence and analysis of chromosome 1 of the plant Arabidopsis thaliana.</title>
        <authorList>
            <person name="Theologis A."/>
            <person name="Ecker J.R."/>
            <person name="Palm C.J."/>
            <person name="Federspiel N.A."/>
            <person name="Kaul S."/>
            <person name="White O."/>
            <person name="Alonso J."/>
            <person name="Altafi H."/>
            <person name="Araujo R."/>
            <person name="Bowman C.L."/>
            <person name="Brooks S.Y."/>
            <person name="Buehler E."/>
            <person name="Chan A."/>
            <person name="Chao Q."/>
            <person name="Chen H."/>
            <person name="Cheuk R.F."/>
            <person name="Chin C.W."/>
            <person name="Chung M.K."/>
            <person name="Conn L."/>
            <person name="Conway A.B."/>
            <person name="Conway A.R."/>
            <person name="Creasy T.H."/>
            <person name="Dewar K."/>
            <person name="Dunn P."/>
            <person name="Etgu P."/>
            <person name="Feldblyum T.V."/>
            <person name="Feng J.-D."/>
            <person name="Fong B."/>
            <person name="Fujii C.Y."/>
            <person name="Gill J.E."/>
            <person name="Goldsmith A.D."/>
            <person name="Haas B."/>
            <person name="Hansen N.F."/>
            <person name="Hughes B."/>
            <person name="Huizar L."/>
            <person name="Hunter J.L."/>
            <person name="Jenkins J."/>
            <person name="Johnson-Hopson C."/>
            <person name="Khan S."/>
            <person name="Khaykin E."/>
            <person name="Kim C.J."/>
            <person name="Koo H.L."/>
            <person name="Kremenetskaia I."/>
            <person name="Kurtz D.B."/>
            <person name="Kwan A."/>
            <person name="Lam B."/>
            <person name="Langin-Hooper S."/>
            <person name="Lee A."/>
            <person name="Lee J.M."/>
            <person name="Lenz C.A."/>
            <person name="Li J.H."/>
            <person name="Li Y.-P."/>
            <person name="Lin X."/>
            <person name="Liu S.X."/>
            <person name="Liu Z.A."/>
            <person name="Luros J.S."/>
            <person name="Maiti R."/>
            <person name="Marziali A."/>
            <person name="Militscher J."/>
            <person name="Miranda M."/>
            <person name="Nguyen M."/>
            <person name="Nierman W.C."/>
            <person name="Osborne B.I."/>
            <person name="Pai G."/>
            <person name="Peterson J."/>
            <person name="Pham P.K."/>
            <person name="Rizzo M."/>
            <person name="Rooney T."/>
            <person name="Rowley D."/>
            <person name="Sakano H."/>
            <person name="Salzberg S.L."/>
            <person name="Schwartz J.R."/>
            <person name="Shinn P."/>
            <person name="Southwick A.M."/>
            <person name="Sun H."/>
            <person name="Tallon L.J."/>
            <person name="Tambunga G."/>
            <person name="Toriumi M.J."/>
            <person name="Town C.D."/>
            <person name="Utterback T."/>
            <person name="Van Aken S."/>
            <person name="Vaysberg M."/>
            <person name="Vysotskaia V.S."/>
            <person name="Walker M."/>
            <person name="Wu D."/>
            <person name="Yu G."/>
            <person name="Fraser C.M."/>
            <person name="Venter J.C."/>
            <person name="Davis R.W."/>
        </authorList>
    </citation>
    <scope>NUCLEOTIDE SEQUENCE [LARGE SCALE GENOMIC DNA]</scope>
    <source>
        <strain>cv. Columbia</strain>
    </source>
</reference>
<reference key="2">
    <citation type="journal article" date="2017" name="Plant J.">
        <title>Araport11: a complete reannotation of the Arabidopsis thaliana reference genome.</title>
        <authorList>
            <person name="Cheng C.Y."/>
            <person name="Krishnakumar V."/>
            <person name="Chan A.P."/>
            <person name="Thibaud-Nissen F."/>
            <person name="Schobel S."/>
            <person name="Town C.D."/>
        </authorList>
    </citation>
    <scope>GENOME REANNOTATION</scope>
    <source>
        <strain>cv. Columbia</strain>
    </source>
</reference>
<reference key="3">
    <citation type="journal article" date="2003" name="Science">
        <title>Empirical analysis of transcriptional activity in the Arabidopsis genome.</title>
        <authorList>
            <person name="Yamada K."/>
            <person name="Lim J."/>
            <person name="Dale J.M."/>
            <person name="Chen H."/>
            <person name="Shinn P."/>
            <person name="Palm C.J."/>
            <person name="Southwick A.M."/>
            <person name="Wu H.C."/>
            <person name="Kim C.J."/>
            <person name="Nguyen M."/>
            <person name="Pham P.K."/>
            <person name="Cheuk R.F."/>
            <person name="Karlin-Newmann G."/>
            <person name="Liu S.X."/>
            <person name="Lam B."/>
            <person name="Sakano H."/>
            <person name="Wu T."/>
            <person name="Yu G."/>
            <person name="Miranda M."/>
            <person name="Quach H.L."/>
            <person name="Tripp M."/>
            <person name="Chang C.H."/>
            <person name="Lee J.M."/>
            <person name="Toriumi M.J."/>
            <person name="Chan M.M."/>
            <person name="Tang C.C."/>
            <person name="Onodera C.S."/>
            <person name="Deng J.M."/>
            <person name="Akiyama K."/>
            <person name="Ansari Y."/>
            <person name="Arakawa T."/>
            <person name="Banh J."/>
            <person name="Banno F."/>
            <person name="Bowser L."/>
            <person name="Brooks S.Y."/>
            <person name="Carninci P."/>
            <person name="Chao Q."/>
            <person name="Choy N."/>
            <person name="Enju A."/>
            <person name="Goldsmith A.D."/>
            <person name="Gurjal M."/>
            <person name="Hansen N.F."/>
            <person name="Hayashizaki Y."/>
            <person name="Johnson-Hopson C."/>
            <person name="Hsuan V.W."/>
            <person name="Iida K."/>
            <person name="Karnes M."/>
            <person name="Khan S."/>
            <person name="Koesema E."/>
            <person name="Ishida J."/>
            <person name="Jiang P.X."/>
            <person name="Jones T."/>
            <person name="Kawai J."/>
            <person name="Kamiya A."/>
            <person name="Meyers C."/>
            <person name="Nakajima M."/>
            <person name="Narusaka M."/>
            <person name="Seki M."/>
            <person name="Sakurai T."/>
            <person name="Satou M."/>
            <person name="Tamse R."/>
            <person name="Vaysberg M."/>
            <person name="Wallender E.K."/>
            <person name="Wong C."/>
            <person name="Yamamura Y."/>
            <person name="Yuan S."/>
            <person name="Shinozaki K."/>
            <person name="Davis R.W."/>
            <person name="Theologis A."/>
            <person name="Ecker J.R."/>
        </authorList>
    </citation>
    <scope>NUCLEOTIDE SEQUENCE [LARGE SCALE MRNA]</scope>
    <source>
        <strain>cv. Columbia</strain>
    </source>
</reference>
<reference key="4">
    <citation type="submission" date="2002-03" db="EMBL/GenBank/DDBJ databases">
        <title>Full-length cDNA from Arabidopsis thaliana.</title>
        <authorList>
            <person name="Brover V.V."/>
            <person name="Troukhan M.E."/>
            <person name="Alexandrov N.A."/>
            <person name="Lu Y.-P."/>
            <person name="Flavell R.B."/>
            <person name="Feldmann K.A."/>
        </authorList>
    </citation>
    <scope>NUCLEOTIDE SEQUENCE [LARGE SCALE MRNA]</scope>
</reference>
<reference key="5">
    <citation type="journal article" date="2007" name="Planta">
        <title>Biochemical and cellular characterization of the plant ortholog of PYM, a protein that interacts with the exon junction complex core proteins Mago and Y14.</title>
        <authorList>
            <person name="Park N.I."/>
            <person name="Muench D.G."/>
        </authorList>
    </citation>
    <scope>INTERACTION WITH MAGO AND Y14</scope>
    <scope>SUBCELLULAR LOCATION</scope>
    <scope>NUCLEAR EXPORT SIGNAL</scope>
    <scope>MUTAGENESIS OF LEU-196 AND LEU-199</scope>
</reference>
<reference key="6">
    <citation type="journal article" date="2011" name="J. Exp. Bot.">
        <title>Functional interconnections of Arabidopsis exon junction complex proteins and genes at multiple steps of gene expression.</title>
        <authorList>
            <person name="Mufarrege E.F."/>
            <person name="Gonzalez D.H."/>
            <person name="Curi G.C."/>
        </authorList>
    </citation>
    <scope>INTERACTION WITH MAGO AND Y14</scope>
    <scope>TISSUE SPECIFICITY</scope>
</reference>
<accession>Q9LPZ4</accession>
<accession>Q8LG67</accession>
<comment type="function">
    <text evidence="1 4">Key regulator of the exon junction complex (EJC), a multiprotein complex that associates immediately upstream of the exon-exon junction on mRNAs and serves as a positional landmark for the intron exon structure of genes and directs post-transcriptional processes in the cytoplasm such as mRNA export, nonsense-mediated mRNA decay (NMD) or translation. Acts as an EJC disassembly factor, allowing translation-dependent EJC removal and recycling by disrupting mature EJC from spliced mRNAs (By similarity). Can increase in vitro the expression from reporter constructs that contain leader introns required for the expression of different genes. In association with MAGO and PYM, participates in intron-mediated enhancement of gene expression (PubMed:21676911).</text>
</comment>
<comment type="subunit">
    <text evidence="3 4">Interacts with MAGO and Y14.</text>
</comment>
<comment type="subcellular location">
    <subcellularLocation>
        <location evidence="3">Cytoplasm</location>
    </subcellularLocation>
    <subcellularLocation>
        <location evidence="3">Nucleus</location>
        <location evidence="3">Nucleolus</location>
    </subcellularLocation>
    <subcellularLocation>
        <location evidence="3">Nucleus</location>
        <location evidence="3">Nucleoplasm</location>
    </subcellularLocation>
    <text evidence="3">Can shuttle between the nucleus and the cytoplasm, but is mainly cytoplasmic.</text>
</comment>
<comment type="tissue specificity">
    <text evidence="4">Expressed in root and shoot meristems, cotyledons, vascular tissues of leaves, receptacle of flowers and siliques, and pollen grains.</text>
</comment>
<comment type="similarity">
    <text evidence="7">Belongs to the pym family.</text>
</comment>
<comment type="sequence caution" evidence="7">
    <conflict type="erroneous initiation">
        <sequence resource="EMBL-CDS" id="AAM61011"/>
    </conflict>
    <text>Truncated N-terminus.</text>
</comment>
<organism>
    <name type="scientific">Arabidopsis thaliana</name>
    <name type="common">Mouse-ear cress</name>
    <dbReference type="NCBI Taxonomy" id="3702"/>
    <lineage>
        <taxon>Eukaryota</taxon>
        <taxon>Viridiplantae</taxon>
        <taxon>Streptophyta</taxon>
        <taxon>Embryophyta</taxon>
        <taxon>Tracheophyta</taxon>
        <taxon>Spermatophyta</taxon>
        <taxon>Magnoliopsida</taxon>
        <taxon>eudicotyledons</taxon>
        <taxon>Gunneridae</taxon>
        <taxon>Pentapetalae</taxon>
        <taxon>rosids</taxon>
        <taxon>malvids</taxon>
        <taxon>Brassicales</taxon>
        <taxon>Brassicaceae</taxon>
        <taxon>Camelineae</taxon>
        <taxon>Arabidopsis</taxon>
    </lineage>
</organism>
<gene>
    <name evidence="5" type="primary">PYM</name>
    <name evidence="8" type="ordered locus">At1g11400</name>
    <name evidence="9" type="ORF">T23J18.7</name>
</gene>
<name>PYM1_ARATH</name>
<sequence>MGSRSGEQGKRMAELSKNLKEGERILEPTRRPDGTLRKPIRIRPGYTPEDEVVKYQSKGSLMKKEMASQGPPGYEPDPAPKPKTKAAKRNERKKEKRLQATAEKANSSEDGSASNGSQSVNVLASEMEALDVSSNNDVCGGAPNPGTTGEDVEKRIRALKKKIRLTEAQQQKTASRDLNPEQLEKFSKLEEWRQELKALEDKAA</sequence>
<keyword id="KW-0963">Cytoplasm</keyword>
<keyword id="KW-0509">mRNA transport</keyword>
<keyword id="KW-0866">Nonsense-mediated mRNA decay</keyword>
<keyword id="KW-0539">Nucleus</keyword>
<keyword id="KW-1185">Reference proteome</keyword>
<keyword id="KW-0694">RNA-binding</keyword>
<keyword id="KW-0810">Translation regulation</keyword>
<keyword id="KW-0813">Transport</keyword>
<evidence type="ECO:0000250" key="1">
    <source>
        <dbReference type="UniProtKB" id="Q9BRP8"/>
    </source>
</evidence>
<evidence type="ECO:0000256" key="2">
    <source>
        <dbReference type="SAM" id="MobiDB-lite"/>
    </source>
</evidence>
<evidence type="ECO:0000269" key="3">
    <source>
    </source>
</evidence>
<evidence type="ECO:0000269" key="4">
    <source>
    </source>
</evidence>
<evidence type="ECO:0000303" key="5">
    <source>
    </source>
</evidence>
<evidence type="ECO:0000303" key="6">
    <source>
    </source>
</evidence>
<evidence type="ECO:0000305" key="7"/>
<evidence type="ECO:0000312" key="8">
    <source>
        <dbReference type="Araport" id="AT1G11400"/>
    </source>
</evidence>
<evidence type="ECO:0000312" key="9">
    <source>
        <dbReference type="EMBL" id="AAF16626.1"/>
    </source>
</evidence>